<feature type="chain" id="PRO_1000049076" description="Large ribosomal subunit protein bL20">
    <location>
        <begin position="1"/>
        <end position="134"/>
    </location>
</feature>
<gene>
    <name evidence="1" type="primary">rplT</name>
    <name type="ordered locus">Smed_3485</name>
</gene>
<name>RL20_SINMW</name>
<organism>
    <name type="scientific">Sinorhizobium medicae (strain WSM419)</name>
    <name type="common">Ensifer medicae</name>
    <dbReference type="NCBI Taxonomy" id="366394"/>
    <lineage>
        <taxon>Bacteria</taxon>
        <taxon>Pseudomonadati</taxon>
        <taxon>Pseudomonadota</taxon>
        <taxon>Alphaproteobacteria</taxon>
        <taxon>Hyphomicrobiales</taxon>
        <taxon>Rhizobiaceae</taxon>
        <taxon>Sinorhizobium/Ensifer group</taxon>
        <taxon>Sinorhizobium</taxon>
    </lineage>
</organism>
<sequence>MARVKRGVTSHAKHKKTLKAAKGFYGRRKNTIRAAKAAVDRSKQFAYRDRKVNKRNFRALWIQRINAAVREFGLTYGRFIDGLNKAGIEVDRKVLSDMAIHEPAAFGALVEASKKALAYLKDAGTANEFESAVR</sequence>
<reference key="1">
    <citation type="submission" date="2007-06" db="EMBL/GenBank/DDBJ databases">
        <title>Complete sequence of Sinorhizobium medicae WSM419 chromosome.</title>
        <authorList>
            <consortium name="US DOE Joint Genome Institute"/>
            <person name="Copeland A."/>
            <person name="Lucas S."/>
            <person name="Lapidus A."/>
            <person name="Barry K."/>
            <person name="Glavina del Rio T."/>
            <person name="Dalin E."/>
            <person name="Tice H."/>
            <person name="Pitluck S."/>
            <person name="Chain P."/>
            <person name="Malfatti S."/>
            <person name="Shin M."/>
            <person name="Vergez L."/>
            <person name="Schmutz J."/>
            <person name="Larimer F."/>
            <person name="Land M."/>
            <person name="Hauser L."/>
            <person name="Kyrpides N."/>
            <person name="Mikhailova N."/>
            <person name="Reeve W.G."/>
            <person name="Richardson P."/>
        </authorList>
    </citation>
    <scope>NUCLEOTIDE SEQUENCE [LARGE SCALE GENOMIC DNA]</scope>
    <source>
        <strain>WSM419</strain>
    </source>
</reference>
<keyword id="KW-0687">Ribonucleoprotein</keyword>
<keyword id="KW-0689">Ribosomal protein</keyword>
<keyword id="KW-0694">RNA-binding</keyword>
<keyword id="KW-0699">rRNA-binding</keyword>
<comment type="function">
    <text evidence="1">Binds directly to 23S ribosomal RNA and is necessary for the in vitro assembly process of the 50S ribosomal subunit. It is not involved in the protein synthesizing functions of that subunit.</text>
</comment>
<comment type="similarity">
    <text evidence="1">Belongs to the bacterial ribosomal protein bL20 family.</text>
</comment>
<dbReference type="EMBL" id="CP000738">
    <property type="protein sequence ID" value="ABR62303.1"/>
    <property type="molecule type" value="Genomic_DNA"/>
</dbReference>
<dbReference type="RefSeq" id="WP_012067682.1">
    <property type="nucleotide sequence ID" value="NC_009636.1"/>
</dbReference>
<dbReference type="RefSeq" id="YP_001329138.1">
    <property type="nucleotide sequence ID" value="NC_009636.1"/>
</dbReference>
<dbReference type="SMR" id="A6UF73"/>
<dbReference type="STRING" id="366394.Smed_3485"/>
<dbReference type="GeneID" id="61611038"/>
<dbReference type="KEGG" id="smd:Smed_3485"/>
<dbReference type="PATRIC" id="fig|366394.8.peg.6736"/>
<dbReference type="eggNOG" id="COG0292">
    <property type="taxonomic scope" value="Bacteria"/>
</dbReference>
<dbReference type="HOGENOM" id="CLU_123265_0_1_5"/>
<dbReference type="OrthoDB" id="9808966at2"/>
<dbReference type="Proteomes" id="UP000001108">
    <property type="component" value="Chromosome"/>
</dbReference>
<dbReference type="GO" id="GO:1990904">
    <property type="term" value="C:ribonucleoprotein complex"/>
    <property type="evidence" value="ECO:0007669"/>
    <property type="project" value="UniProtKB-KW"/>
</dbReference>
<dbReference type="GO" id="GO:0005840">
    <property type="term" value="C:ribosome"/>
    <property type="evidence" value="ECO:0007669"/>
    <property type="project" value="UniProtKB-KW"/>
</dbReference>
<dbReference type="GO" id="GO:0019843">
    <property type="term" value="F:rRNA binding"/>
    <property type="evidence" value="ECO:0007669"/>
    <property type="project" value="UniProtKB-UniRule"/>
</dbReference>
<dbReference type="GO" id="GO:0003735">
    <property type="term" value="F:structural constituent of ribosome"/>
    <property type="evidence" value="ECO:0007669"/>
    <property type="project" value="InterPro"/>
</dbReference>
<dbReference type="GO" id="GO:0000027">
    <property type="term" value="P:ribosomal large subunit assembly"/>
    <property type="evidence" value="ECO:0007669"/>
    <property type="project" value="UniProtKB-UniRule"/>
</dbReference>
<dbReference type="GO" id="GO:0006412">
    <property type="term" value="P:translation"/>
    <property type="evidence" value="ECO:0007669"/>
    <property type="project" value="InterPro"/>
</dbReference>
<dbReference type="CDD" id="cd07026">
    <property type="entry name" value="Ribosomal_L20"/>
    <property type="match status" value="1"/>
</dbReference>
<dbReference type="FunFam" id="1.10.1900.20:FF:000001">
    <property type="entry name" value="50S ribosomal protein L20"/>
    <property type="match status" value="1"/>
</dbReference>
<dbReference type="Gene3D" id="6.10.160.10">
    <property type="match status" value="1"/>
</dbReference>
<dbReference type="Gene3D" id="1.10.1900.20">
    <property type="entry name" value="Ribosomal protein L20"/>
    <property type="match status" value="1"/>
</dbReference>
<dbReference type="HAMAP" id="MF_00382">
    <property type="entry name" value="Ribosomal_bL20"/>
    <property type="match status" value="1"/>
</dbReference>
<dbReference type="InterPro" id="IPR005813">
    <property type="entry name" value="Ribosomal_bL20"/>
</dbReference>
<dbReference type="InterPro" id="IPR049946">
    <property type="entry name" value="RIBOSOMAL_L20_CS"/>
</dbReference>
<dbReference type="InterPro" id="IPR035566">
    <property type="entry name" value="Ribosomal_protein_bL20_C"/>
</dbReference>
<dbReference type="NCBIfam" id="TIGR01032">
    <property type="entry name" value="rplT_bact"/>
    <property type="match status" value="1"/>
</dbReference>
<dbReference type="PANTHER" id="PTHR10986">
    <property type="entry name" value="39S RIBOSOMAL PROTEIN L20"/>
    <property type="match status" value="1"/>
</dbReference>
<dbReference type="Pfam" id="PF00453">
    <property type="entry name" value="Ribosomal_L20"/>
    <property type="match status" value="1"/>
</dbReference>
<dbReference type="PRINTS" id="PR00062">
    <property type="entry name" value="RIBOSOMALL20"/>
</dbReference>
<dbReference type="SUPFAM" id="SSF74731">
    <property type="entry name" value="Ribosomal protein L20"/>
    <property type="match status" value="1"/>
</dbReference>
<dbReference type="PROSITE" id="PS00937">
    <property type="entry name" value="RIBOSOMAL_L20"/>
    <property type="match status" value="1"/>
</dbReference>
<proteinExistence type="inferred from homology"/>
<accession>A6UF73</accession>
<evidence type="ECO:0000255" key="1">
    <source>
        <dbReference type="HAMAP-Rule" id="MF_00382"/>
    </source>
</evidence>
<evidence type="ECO:0000305" key="2"/>
<protein>
    <recommendedName>
        <fullName evidence="1">Large ribosomal subunit protein bL20</fullName>
    </recommendedName>
    <alternativeName>
        <fullName evidence="2">50S ribosomal protein L20</fullName>
    </alternativeName>
</protein>